<gene>
    <name type="primary">POA1</name>
    <name type="ordered locus">CAGL0B04411g</name>
</gene>
<accession>Q6FXN3</accession>
<comment type="function">
    <text evidence="1">Highly specific phosphatase involved in the metabolism of ADP-ribose 1''-phosphate (Appr1p) which is produced as a consequence of tRNA splicing.</text>
</comment>
<comment type="catalytic activity">
    <reaction>
        <text>ADP-alpha-D-ribose 1''-phosphate + H2O = ADP-D-ribose + phosphate</text>
        <dbReference type="Rhea" id="RHEA:25029"/>
        <dbReference type="ChEBI" id="CHEBI:15377"/>
        <dbReference type="ChEBI" id="CHEBI:43474"/>
        <dbReference type="ChEBI" id="CHEBI:57967"/>
        <dbReference type="ChEBI" id="CHEBI:58753"/>
        <dbReference type="EC" id="3.1.3.84"/>
    </reaction>
</comment>
<comment type="similarity">
    <text evidence="3">Belongs to the POA1 family.</text>
</comment>
<evidence type="ECO:0000250" key="1"/>
<evidence type="ECO:0000255" key="2">
    <source>
        <dbReference type="PROSITE-ProRule" id="PRU00490"/>
    </source>
</evidence>
<evidence type="ECO:0000305" key="3"/>
<reference key="1">
    <citation type="journal article" date="2004" name="Nature">
        <title>Genome evolution in yeasts.</title>
        <authorList>
            <person name="Dujon B."/>
            <person name="Sherman D."/>
            <person name="Fischer G."/>
            <person name="Durrens P."/>
            <person name="Casaregola S."/>
            <person name="Lafontaine I."/>
            <person name="de Montigny J."/>
            <person name="Marck C."/>
            <person name="Neuveglise C."/>
            <person name="Talla E."/>
            <person name="Goffard N."/>
            <person name="Frangeul L."/>
            <person name="Aigle M."/>
            <person name="Anthouard V."/>
            <person name="Babour A."/>
            <person name="Barbe V."/>
            <person name="Barnay S."/>
            <person name="Blanchin S."/>
            <person name="Beckerich J.-M."/>
            <person name="Beyne E."/>
            <person name="Bleykasten C."/>
            <person name="Boisrame A."/>
            <person name="Boyer J."/>
            <person name="Cattolico L."/>
            <person name="Confanioleri F."/>
            <person name="de Daruvar A."/>
            <person name="Despons L."/>
            <person name="Fabre E."/>
            <person name="Fairhead C."/>
            <person name="Ferry-Dumazet H."/>
            <person name="Groppi A."/>
            <person name="Hantraye F."/>
            <person name="Hennequin C."/>
            <person name="Jauniaux N."/>
            <person name="Joyet P."/>
            <person name="Kachouri R."/>
            <person name="Kerrest A."/>
            <person name="Koszul R."/>
            <person name="Lemaire M."/>
            <person name="Lesur I."/>
            <person name="Ma L."/>
            <person name="Muller H."/>
            <person name="Nicaud J.-M."/>
            <person name="Nikolski M."/>
            <person name="Oztas S."/>
            <person name="Ozier-Kalogeropoulos O."/>
            <person name="Pellenz S."/>
            <person name="Potier S."/>
            <person name="Richard G.-F."/>
            <person name="Straub M.-L."/>
            <person name="Suleau A."/>
            <person name="Swennen D."/>
            <person name="Tekaia F."/>
            <person name="Wesolowski-Louvel M."/>
            <person name="Westhof E."/>
            <person name="Wirth B."/>
            <person name="Zeniou-Meyer M."/>
            <person name="Zivanovic Y."/>
            <person name="Bolotin-Fukuhara M."/>
            <person name="Thierry A."/>
            <person name="Bouchier C."/>
            <person name="Caudron B."/>
            <person name="Scarpelli C."/>
            <person name="Gaillardin C."/>
            <person name="Weissenbach J."/>
            <person name="Wincker P."/>
            <person name="Souciet J.-L."/>
        </authorList>
    </citation>
    <scope>NUCLEOTIDE SEQUENCE [LARGE SCALE GENOMIC DNA]</scope>
    <source>
        <strain>ATCC 2001 / BCRC 20586 / JCM 3761 / NBRC 0622 / NRRL Y-65 / CBS 138</strain>
    </source>
</reference>
<protein>
    <recommendedName>
        <fullName>ADP-ribose 1''-phosphate phosphatase</fullName>
        <ecNumber>3.1.3.84</ecNumber>
    </recommendedName>
</protein>
<name>POA1_CANGA</name>
<organism>
    <name type="scientific">Candida glabrata (strain ATCC 2001 / BCRC 20586 / JCM 3761 / NBRC 0622 / NRRL Y-65 / CBS 138)</name>
    <name type="common">Yeast</name>
    <name type="synonym">Nakaseomyces glabratus</name>
    <dbReference type="NCBI Taxonomy" id="284593"/>
    <lineage>
        <taxon>Eukaryota</taxon>
        <taxon>Fungi</taxon>
        <taxon>Dikarya</taxon>
        <taxon>Ascomycota</taxon>
        <taxon>Saccharomycotina</taxon>
        <taxon>Saccharomycetes</taxon>
        <taxon>Saccharomycetales</taxon>
        <taxon>Saccharomycetaceae</taxon>
        <taxon>Nakaseomyces</taxon>
    </lineage>
</organism>
<proteinExistence type="inferred from homology"/>
<keyword id="KW-0378">Hydrolase</keyword>
<keyword id="KW-0904">Protein phosphatase</keyword>
<keyword id="KW-1185">Reference proteome</keyword>
<dbReference type="EC" id="3.1.3.84"/>
<dbReference type="EMBL" id="CR380948">
    <property type="protein sequence ID" value="CAG58062.1"/>
    <property type="molecule type" value="Genomic_DNA"/>
</dbReference>
<dbReference type="RefSeq" id="XP_445162.1">
    <property type="nucleotide sequence ID" value="XM_445162.1"/>
</dbReference>
<dbReference type="SMR" id="Q6FXN3"/>
<dbReference type="FunCoup" id="Q6FXN3">
    <property type="interactions" value="9"/>
</dbReference>
<dbReference type="STRING" id="284593.Q6FXN3"/>
<dbReference type="EnsemblFungi" id="CAGL0B04411g-T">
    <property type="protein sequence ID" value="CAGL0B04411g-T-p1"/>
    <property type="gene ID" value="CAGL0B04411g"/>
</dbReference>
<dbReference type="KEGG" id="cgr:2886571"/>
<dbReference type="CGD" id="CAL0127810">
    <property type="gene designation" value="CAGL0B04411g"/>
</dbReference>
<dbReference type="VEuPathDB" id="FungiDB:CAGL0B04411g"/>
<dbReference type="eggNOG" id="ENOG502S60W">
    <property type="taxonomic scope" value="Eukaryota"/>
</dbReference>
<dbReference type="HOGENOM" id="CLU_054419_1_2_1"/>
<dbReference type="InParanoid" id="Q6FXN3"/>
<dbReference type="OMA" id="CQGSWGK"/>
<dbReference type="Proteomes" id="UP000002428">
    <property type="component" value="Chromosome B"/>
</dbReference>
<dbReference type="GO" id="GO:0047407">
    <property type="term" value="F:ADP-ribosyl-[dinitrogen reductase] hydrolase activity"/>
    <property type="evidence" value="ECO:0007669"/>
    <property type="project" value="EnsemblFungi"/>
</dbReference>
<dbReference type="GO" id="GO:0004721">
    <property type="term" value="F:phosphoprotein phosphatase activity"/>
    <property type="evidence" value="ECO:0007669"/>
    <property type="project" value="UniProtKB-KW"/>
</dbReference>
<dbReference type="GO" id="GO:0140291">
    <property type="term" value="P:peptidyl-glutamate ADP-deribosylation"/>
    <property type="evidence" value="ECO:0007669"/>
    <property type="project" value="TreeGrafter"/>
</dbReference>
<dbReference type="CDD" id="cd02901">
    <property type="entry name" value="Macro_Poa1p-like"/>
    <property type="match status" value="1"/>
</dbReference>
<dbReference type="Gene3D" id="3.40.220.10">
    <property type="entry name" value="Leucine Aminopeptidase, subunit E, domain 1"/>
    <property type="match status" value="1"/>
</dbReference>
<dbReference type="InterPro" id="IPR050892">
    <property type="entry name" value="ADP-ribose_metab_enzymes"/>
</dbReference>
<dbReference type="InterPro" id="IPR002589">
    <property type="entry name" value="Macro_dom"/>
</dbReference>
<dbReference type="InterPro" id="IPR043472">
    <property type="entry name" value="Macro_dom-like"/>
</dbReference>
<dbReference type="PANTHER" id="PTHR12521:SF0">
    <property type="entry name" value="ADP-RIBOSE GLYCOHYDROLASE OARD1"/>
    <property type="match status" value="1"/>
</dbReference>
<dbReference type="PANTHER" id="PTHR12521">
    <property type="entry name" value="PROTEIN C6ORF130"/>
    <property type="match status" value="1"/>
</dbReference>
<dbReference type="Pfam" id="PF01661">
    <property type="entry name" value="Macro"/>
    <property type="match status" value="1"/>
</dbReference>
<dbReference type="SMART" id="SM00506">
    <property type="entry name" value="A1pp"/>
    <property type="match status" value="1"/>
</dbReference>
<dbReference type="SUPFAM" id="SSF52949">
    <property type="entry name" value="Macro domain-like"/>
    <property type="match status" value="1"/>
</dbReference>
<dbReference type="PROSITE" id="PS51154">
    <property type="entry name" value="MACRO"/>
    <property type="match status" value="1"/>
</dbReference>
<sequence>MSNIHYIKGNILKGRTYKRIIIHSCNANGAWGGGIAYQLAVKHPKAEEVYVDLCERFGQKLLGKCVVIPSYSDDDVLIGCLFTSIFGGASHGSGTSIVDYTDKALSHFDELLAKEQSKSDNANLDKEIEKLLKLKSGVLKDYKLEMPKINSGIFGVPWPETEEVLKKYDRSMNFTVYEL</sequence>
<feature type="chain" id="PRO_0000324905" description="ADP-ribose 1''-phosphate phosphatase">
    <location>
        <begin position="1"/>
        <end position="179"/>
    </location>
</feature>
<feature type="domain" description="Macro" evidence="2">
    <location>
        <begin position="1"/>
        <end position="179"/>
    </location>
</feature>
<feature type="binding site" evidence="1">
    <location>
        <begin position="9"/>
        <end position="11"/>
    </location>
    <ligand>
        <name>substrate</name>
    </ligand>
</feature>
<feature type="binding site" evidence="1">
    <location>
        <begin position="24"/>
        <end position="26"/>
    </location>
    <ligand>
        <name>substrate</name>
    </ligand>
</feature>
<feature type="binding site" evidence="1">
    <location>
        <begin position="31"/>
        <end position="36"/>
    </location>
    <ligand>
        <name>substrate</name>
    </ligand>
</feature>
<feature type="binding site" evidence="1">
    <location>
        <begin position="149"/>
        <end position="155"/>
    </location>
    <ligand>
        <name>substrate</name>
    </ligand>
</feature>